<evidence type="ECO:0000250" key="1"/>
<evidence type="ECO:0000269" key="2">
    <source>
    </source>
</evidence>
<evidence type="ECO:0000305" key="3"/>
<reference key="1">
    <citation type="journal article" date="1998" name="Science">
        <title>Complete genome sequence of Treponema pallidum, the syphilis spirochete.</title>
        <authorList>
            <person name="Fraser C.M."/>
            <person name="Norris S.J."/>
            <person name="Weinstock G.M."/>
            <person name="White O."/>
            <person name="Sutton G.G."/>
            <person name="Dodson R.J."/>
            <person name="Gwinn M.L."/>
            <person name="Hickey E.K."/>
            <person name="Clayton R.A."/>
            <person name="Ketchum K.A."/>
            <person name="Sodergren E."/>
            <person name="Hardham J.M."/>
            <person name="McLeod M.P."/>
            <person name="Salzberg S.L."/>
            <person name="Peterson J.D."/>
            <person name="Khalak H.G."/>
            <person name="Richardson D.L."/>
            <person name="Howell J.K."/>
            <person name="Chidambaram M."/>
            <person name="Utterback T.R."/>
            <person name="McDonald L.A."/>
            <person name="Artiach P."/>
            <person name="Bowman C."/>
            <person name="Cotton M.D."/>
            <person name="Fujii C."/>
            <person name="Garland S.A."/>
            <person name="Hatch B."/>
            <person name="Horst K."/>
            <person name="Roberts K.M."/>
            <person name="Sandusky M."/>
            <person name="Weidman J.F."/>
            <person name="Smith H.O."/>
            <person name="Venter J.C."/>
        </authorList>
    </citation>
    <scope>NUCLEOTIDE SEQUENCE [LARGE SCALE GENOMIC DNA]</scope>
    <source>
        <strain>Nichols</strain>
    </source>
</reference>
<reference key="2">
    <citation type="journal article" date="2012" name="PLoS Genet.">
        <title>RsfA (YbeB) proteins are conserved ribosomal silencing factors.</title>
        <authorList>
            <person name="Hauser R."/>
            <person name="Pech M."/>
            <person name="Kijek J."/>
            <person name="Yamamoto H."/>
            <person name="Titz B."/>
            <person name="Naeve F."/>
            <person name="Tovchigrechko A."/>
            <person name="Yamamoto K."/>
            <person name="Szaflarski W."/>
            <person name="Takeuchi N."/>
            <person name="Stellberger T."/>
            <person name="Diefenbacher M.E."/>
            <person name="Nierhaus K.H."/>
            <person name="Uetz P."/>
        </authorList>
    </citation>
    <scope>INTERACTION WITH RPLN</scope>
    <source>
        <strain>Nichols</strain>
    </source>
</reference>
<name>IOJAP_TREPA</name>
<dbReference type="EMBL" id="AE000520">
    <property type="protein sequence ID" value="AAC65706.1"/>
    <property type="molecule type" value="Genomic_DNA"/>
</dbReference>
<dbReference type="PIR" id="G71288">
    <property type="entry name" value="G71288"/>
</dbReference>
<dbReference type="RefSeq" id="WP_010882183.1">
    <property type="nucleotide sequence ID" value="NC_021490.2"/>
</dbReference>
<dbReference type="SMR" id="O83720"/>
<dbReference type="IntAct" id="O83720">
    <property type="interactions" value="66"/>
</dbReference>
<dbReference type="STRING" id="243276.TP_0738"/>
<dbReference type="EnsemblBacteria" id="AAC65706">
    <property type="protein sequence ID" value="AAC65706"/>
    <property type="gene ID" value="TP_0738"/>
</dbReference>
<dbReference type="GeneID" id="93876506"/>
<dbReference type="KEGG" id="tpa:TP_0738"/>
<dbReference type="KEGG" id="tpw:TPANIC_0738"/>
<dbReference type="eggNOG" id="COG0799">
    <property type="taxonomic scope" value="Bacteria"/>
</dbReference>
<dbReference type="HOGENOM" id="CLU_092688_5_0_12"/>
<dbReference type="OrthoDB" id="9793681at2"/>
<dbReference type="Proteomes" id="UP000000811">
    <property type="component" value="Chromosome"/>
</dbReference>
<dbReference type="GO" id="GO:0005737">
    <property type="term" value="C:cytoplasm"/>
    <property type="evidence" value="ECO:0007669"/>
    <property type="project" value="UniProtKB-SubCell"/>
</dbReference>
<dbReference type="GO" id="GO:0043023">
    <property type="term" value="F:ribosomal large subunit binding"/>
    <property type="evidence" value="ECO:0007669"/>
    <property type="project" value="TreeGrafter"/>
</dbReference>
<dbReference type="GO" id="GO:0042256">
    <property type="term" value="P:cytosolic ribosome assembly"/>
    <property type="evidence" value="ECO:0007669"/>
    <property type="project" value="UniProtKB-UniRule"/>
</dbReference>
<dbReference type="GO" id="GO:0090071">
    <property type="term" value="P:negative regulation of ribosome biogenesis"/>
    <property type="evidence" value="ECO:0007669"/>
    <property type="project" value="UniProtKB-UniRule"/>
</dbReference>
<dbReference type="GO" id="GO:0017148">
    <property type="term" value="P:negative regulation of translation"/>
    <property type="evidence" value="ECO:0007669"/>
    <property type="project" value="UniProtKB-UniRule"/>
</dbReference>
<dbReference type="Gene3D" id="3.30.460.10">
    <property type="entry name" value="Beta Polymerase, domain 2"/>
    <property type="match status" value="1"/>
</dbReference>
<dbReference type="HAMAP" id="MF_01477">
    <property type="entry name" value="Iojap_RsfS"/>
    <property type="match status" value="1"/>
</dbReference>
<dbReference type="InterPro" id="IPR004394">
    <property type="entry name" value="Iojap/RsfS/C7orf30"/>
</dbReference>
<dbReference type="InterPro" id="IPR043519">
    <property type="entry name" value="NT_sf"/>
</dbReference>
<dbReference type="NCBIfam" id="TIGR00090">
    <property type="entry name" value="rsfS_iojap_ybeB"/>
    <property type="match status" value="1"/>
</dbReference>
<dbReference type="PANTHER" id="PTHR21043">
    <property type="entry name" value="IOJAP SUPERFAMILY ORTHOLOG"/>
    <property type="match status" value="1"/>
</dbReference>
<dbReference type="PANTHER" id="PTHR21043:SF0">
    <property type="entry name" value="MITOCHONDRIAL ASSEMBLY OF RIBOSOMAL LARGE SUBUNIT PROTEIN 1"/>
    <property type="match status" value="1"/>
</dbReference>
<dbReference type="Pfam" id="PF02410">
    <property type="entry name" value="RsfS"/>
    <property type="match status" value="1"/>
</dbReference>
<dbReference type="SUPFAM" id="SSF81301">
    <property type="entry name" value="Nucleotidyltransferase"/>
    <property type="match status" value="1"/>
</dbReference>
<organism>
    <name type="scientific">Treponema pallidum (strain Nichols)</name>
    <dbReference type="NCBI Taxonomy" id="243276"/>
    <lineage>
        <taxon>Bacteria</taxon>
        <taxon>Pseudomonadati</taxon>
        <taxon>Spirochaetota</taxon>
        <taxon>Spirochaetia</taxon>
        <taxon>Spirochaetales</taxon>
        <taxon>Treponemataceae</taxon>
        <taxon>Treponema</taxon>
    </lineage>
</organism>
<proteinExistence type="evidence at protein level"/>
<keyword id="KW-0963">Cytoplasm</keyword>
<keyword id="KW-1185">Reference proteome</keyword>
<keyword id="KW-0678">Repressor</keyword>
<keyword id="KW-0810">Translation regulation</keyword>
<feature type="chain" id="PRO_0000419627" description="Ribosomal silencing factor RsfS">
    <location>
        <begin position="1"/>
        <end position="111"/>
    </location>
</feature>
<comment type="function">
    <text evidence="1">Functions as a ribosomal silencing factor. Interacts with ribosomal protein uL14 (rplN), blocking formation of intersubunit bridge B8. Prevents association of the 30S and 50S ribosomal subunits and the formation of functional ribosomes, thus repressing translation (By similarity).</text>
</comment>
<comment type="subunit">
    <text evidence="2">Interacts with ribosomal protein uL14 (rplN).</text>
</comment>
<comment type="subcellular location">
    <subcellularLocation>
        <location evidence="1">Cytoplasm</location>
    </subcellularLocation>
</comment>
<comment type="similarity">
    <text evidence="3">Belongs to the Iojap/RsfS family.</text>
</comment>
<protein>
    <recommendedName>
        <fullName>Ribosomal silencing factor RsfS</fullName>
    </recommendedName>
</protein>
<accession>O83720</accession>
<gene>
    <name type="primary">rsfS</name>
    <name type="ordered locus">TP_0738</name>
</gene>
<sequence>MSANGAASAVAEALCDARAEDVCVFDVSARCGWADFAVVATVPGLLHGTHRLVCEQAARFGLREVHRKKRGLCEEQWRVLDFGSILVHLMSAQARAFYDLDRLWQDCLVAR</sequence>